<dbReference type="EC" id="2.1.1.319" evidence="3"/>
<dbReference type="EMBL" id="CH477406">
    <property type="protein sequence ID" value="EAT41589.1"/>
    <property type="molecule type" value="Genomic_DNA"/>
</dbReference>
<dbReference type="RefSeq" id="XP_001652238.1">
    <property type="nucleotide sequence ID" value="XM_001652188.1"/>
</dbReference>
<dbReference type="SMR" id="Q174R2"/>
<dbReference type="FunCoup" id="Q174R2">
    <property type="interactions" value="2313"/>
</dbReference>
<dbReference type="STRING" id="7159.Q174R2"/>
<dbReference type="PaxDb" id="7159-AAEL006782-PA"/>
<dbReference type="GeneID" id="5579949"/>
<dbReference type="KEGG" id="aag:5579949"/>
<dbReference type="VEuPathDB" id="VectorBase:AAEL006782"/>
<dbReference type="eggNOG" id="KOG1500">
    <property type="taxonomic scope" value="Eukaryota"/>
</dbReference>
<dbReference type="HOGENOM" id="CLU_017375_0_1_1"/>
<dbReference type="InParanoid" id="Q174R2"/>
<dbReference type="OMA" id="ASNMAHH"/>
<dbReference type="OrthoDB" id="7848332at2759"/>
<dbReference type="PhylomeDB" id="Q174R2"/>
<dbReference type="Proteomes" id="UP000008820">
    <property type="component" value="Unassembled WGS sequence"/>
</dbReference>
<dbReference type="Proteomes" id="UP000682892">
    <property type="component" value="Chromosome 3"/>
</dbReference>
<dbReference type="GO" id="GO:0005737">
    <property type="term" value="C:cytoplasm"/>
    <property type="evidence" value="ECO:0000250"/>
    <property type="project" value="UniProtKB"/>
</dbReference>
<dbReference type="GO" id="GO:0005634">
    <property type="term" value="C:nucleus"/>
    <property type="evidence" value="ECO:0000250"/>
    <property type="project" value="UniProtKB"/>
</dbReference>
<dbReference type="GO" id="GO:0035642">
    <property type="term" value="F:histone H3R17 methyltransferase activity"/>
    <property type="evidence" value="ECO:0000250"/>
    <property type="project" value="UniProtKB"/>
</dbReference>
<dbReference type="GO" id="GO:0070611">
    <property type="term" value="F:histone H3R2 methyltransferase activity"/>
    <property type="evidence" value="ECO:0000250"/>
    <property type="project" value="UniProtKB"/>
</dbReference>
<dbReference type="GO" id="GO:0140903">
    <property type="term" value="F:histone H3R26 methyltransferase activity"/>
    <property type="evidence" value="ECO:0000250"/>
    <property type="project" value="UniProtKB"/>
</dbReference>
<dbReference type="GO" id="GO:0035242">
    <property type="term" value="F:protein-arginine omega-N asymmetric methyltransferase activity"/>
    <property type="evidence" value="ECO:0000250"/>
    <property type="project" value="UniProtKB"/>
</dbReference>
<dbReference type="GO" id="GO:0035241">
    <property type="term" value="F:protein-arginine omega-N monomethyltransferase activity"/>
    <property type="evidence" value="ECO:0000250"/>
    <property type="project" value="UniProtKB"/>
</dbReference>
<dbReference type="GO" id="GO:0006338">
    <property type="term" value="P:chromatin remodeling"/>
    <property type="evidence" value="ECO:0000250"/>
    <property type="project" value="UniProtKB"/>
</dbReference>
<dbReference type="GO" id="GO:0019919">
    <property type="term" value="P:peptidyl-arginine methylation, to asymmetrical-dimethyl arginine"/>
    <property type="evidence" value="ECO:0000250"/>
    <property type="project" value="UniProtKB"/>
</dbReference>
<dbReference type="GO" id="GO:0006355">
    <property type="term" value="P:regulation of DNA-templated transcription"/>
    <property type="evidence" value="ECO:0000250"/>
    <property type="project" value="UniProtKB"/>
</dbReference>
<dbReference type="CDD" id="cd02440">
    <property type="entry name" value="AdoMet_MTases"/>
    <property type="match status" value="1"/>
</dbReference>
<dbReference type="FunFam" id="2.70.160.11:FF:000002">
    <property type="entry name" value="Probable histone-arginine methyltransferase CARM1"/>
    <property type="match status" value="1"/>
</dbReference>
<dbReference type="FunFam" id="3.40.50.150:FF:000031">
    <property type="entry name" value="Putative Histone-arginine methyltransferase CARM1"/>
    <property type="match status" value="1"/>
</dbReference>
<dbReference type="Gene3D" id="2.70.160.11">
    <property type="entry name" value="Hnrnp arginine n-methyltransferase1"/>
    <property type="match status" value="1"/>
</dbReference>
<dbReference type="Gene3D" id="3.40.50.150">
    <property type="entry name" value="Vaccinia Virus protein VP39"/>
    <property type="match status" value="1"/>
</dbReference>
<dbReference type="InterPro" id="IPR025799">
    <property type="entry name" value="Arg_MeTrfase"/>
</dbReference>
<dbReference type="InterPro" id="IPR055135">
    <property type="entry name" value="PRMT_dom"/>
</dbReference>
<dbReference type="InterPro" id="IPR029063">
    <property type="entry name" value="SAM-dependent_MTases_sf"/>
</dbReference>
<dbReference type="PANTHER" id="PTHR11006:SF10">
    <property type="entry name" value="HISTONE-ARGININE METHYLTRANSFERASE CARMER-RELATED"/>
    <property type="match status" value="1"/>
</dbReference>
<dbReference type="PANTHER" id="PTHR11006">
    <property type="entry name" value="PROTEIN ARGININE N-METHYLTRANSFERASE"/>
    <property type="match status" value="1"/>
</dbReference>
<dbReference type="Pfam" id="PF06325">
    <property type="entry name" value="PrmA"/>
    <property type="match status" value="1"/>
</dbReference>
<dbReference type="Pfam" id="PF22528">
    <property type="entry name" value="PRMT_C"/>
    <property type="match status" value="1"/>
</dbReference>
<dbReference type="SUPFAM" id="SSF53335">
    <property type="entry name" value="S-adenosyl-L-methionine-dependent methyltransferases"/>
    <property type="match status" value="1"/>
</dbReference>
<dbReference type="PROSITE" id="PS51678">
    <property type="entry name" value="SAM_MT_PRMT"/>
    <property type="match status" value="1"/>
</dbReference>
<protein>
    <recommendedName>
        <fullName evidence="3">Histone-arginine methyltransferase CARMER</fullName>
        <ecNumber evidence="3">2.1.1.319</ecNumber>
    </recommendedName>
</protein>
<reference evidence="7" key="1">
    <citation type="journal article" date="2007" name="Science">
        <title>Genome sequence of Aedes aegypti, a major arbovirus vector.</title>
        <authorList>
            <person name="Nene V."/>
            <person name="Wortman J.R."/>
            <person name="Lawson D."/>
            <person name="Haas B.J."/>
            <person name="Kodira C.D."/>
            <person name="Tu Z.J."/>
            <person name="Loftus B.J."/>
            <person name="Xi Z."/>
            <person name="Megy K."/>
            <person name="Grabherr M."/>
            <person name="Ren Q."/>
            <person name="Zdobnov E.M."/>
            <person name="Lobo N.F."/>
            <person name="Campbell K.S."/>
            <person name="Brown S.E."/>
            <person name="Bonaldo M.F."/>
            <person name="Zhu J."/>
            <person name="Sinkins S.P."/>
            <person name="Hogenkamp D.G."/>
            <person name="Amedeo P."/>
            <person name="Arensburger P."/>
            <person name="Atkinson P.W."/>
            <person name="Bidwell S.L."/>
            <person name="Biedler J."/>
            <person name="Birney E."/>
            <person name="Bruggner R.V."/>
            <person name="Costas J."/>
            <person name="Coy M.R."/>
            <person name="Crabtree J."/>
            <person name="Crawford M."/>
            <person name="DeBruyn B."/>
            <person name="DeCaprio D."/>
            <person name="Eiglmeier K."/>
            <person name="Eisenstadt E."/>
            <person name="El-Dorry H."/>
            <person name="Gelbart W.M."/>
            <person name="Gomes S.L."/>
            <person name="Hammond M."/>
            <person name="Hannick L.I."/>
            <person name="Hogan J.R."/>
            <person name="Holmes M.H."/>
            <person name="Jaffe D."/>
            <person name="Johnston S.J."/>
            <person name="Kennedy R.C."/>
            <person name="Koo H."/>
            <person name="Kravitz S."/>
            <person name="Kriventseva E.V."/>
            <person name="Kulp D."/>
            <person name="Labutti K."/>
            <person name="Lee E."/>
            <person name="Li S."/>
            <person name="Lovin D.D."/>
            <person name="Mao C."/>
            <person name="Mauceli E."/>
            <person name="Menck C.F."/>
            <person name="Miller J.R."/>
            <person name="Montgomery P."/>
            <person name="Mori A."/>
            <person name="Nascimento A.L."/>
            <person name="Naveira H.F."/>
            <person name="Nusbaum C."/>
            <person name="O'Leary S.B."/>
            <person name="Orvis J."/>
            <person name="Pertea M."/>
            <person name="Quesneville H."/>
            <person name="Reidenbach K.R."/>
            <person name="Rogers Y.-H.C."/>
            <person name="Roth C.W."/>
            <person name="Schneider J.R."/>
            <person name="Schatz M."/>
            <person name="Shumway M."/>
            <person name="Stanke M."/>
            <person name="Stinson E.O."/>
            <person name="Tubio J.M.C."/>
            <person name="Vanzee J.P."/>
            <person name="Verjovski-Almeida S."/>
            <person name="Werner D."/>
            <person name="White O.R."/>
            <person name="Wyder S."/>
            <person name="Zeng Q."/>
            <person name="Zhao Q."/>
            <person name="Zhao Y."/>
            <person name="Hill C.A."/>
            <person name="Raikhel A.S."/>
            <person name="Soares M.B."/>
            <person name="Knudson D.L."/>
            <person name="Lee N.H."/>
            <person name="Galagan J."/>
            <person name="Salzberg S.L."/>
            <person name="Paulsen I.T."/>
            <person name="Dimopoulos G."/>
            <person name="Collins F.H."/>
            <person name="Bruce B."/>
            <person name="Fraser-Liggett C.M."/>
            <person name="Severson D.W."/>
        </authorList>
    </citation>
    <scope>NUCLEOTIDE SEQUENCE [LARGE SCALE GENOMIC DNA]</scope>
    <source>
        <strain>LVPib12</strain>
    </source>
</reference>
<feature type="chain" id="PRO_0000399501" description="Histone-arginine methyltransferase CARMER">
    <location>
        <begin position="1"/>
        <end position="593"/>
    </location>
</feature>
<feature type="domain" description="SAM-dependent MTase PRMT-type" evidence="5">
    <location>
        <begin position="122"/>
        <end position="429"/>
    </location>
</feature>
<feature type="region of interest" description="Disordered" evidence="6">
    <location>
        <begin position="521"/>
        <end position="540"/>
    </location>
</feature>
<feature type="compositionally biased region" description="Low complexity" evidence="6">
    <location>
        <begin position="523"/>
        <end position="535"/>
    </location>
</feature>
<feature type="binding site" evidence="2">
    <location>
        <position position="135"/>
    </location>
    <ligand>
        <name>S-adenosyl-L-methionine</name>
        <dbReference type="ChEBI" id="CHEBI:59789"/>
    </ligand>
</feature>
<feature type="binding site" evidence="2">
    <location>
        <position position="144"/>
    </location>
    <ligand>
        <name>S-adenosyl-L-methionine</name>
        <dbReference type="ChEBI" id="CHEBI:59789"/>
    </ligand>
</feature>
<feature type="binding site" evidence="2">
    <location>
        <position position="168"/>
    </location>
    <ligand>
        <name>S-adenosyl-L-methionine</name>
        <dbReference type="ChEBI" id="CHEBI:59789"/>
    </ligand>
</feature>
<feature type="binding site" evidence="2">
    <location>
        <position position="190"/>
    </location>
    <ligand>
        <name>S-adenosyl-L-methionine</name>
        <dbReference type="ChEBI" id="CHEBI:59789"/>
    </ligand>
</feature>
<feature type="binding site" evidence="2">
    <location>
        <position position="219"/>
    </location>
    <ligand>
        <name>S-adenosyl-L-methionine</name>
        <dbReference type="ChEBI" id="CHEBI:59789"/>
    </ligand>
</feature>
<feature type="binding site" evidence="1">
    <location>
        <position position="247"/>
    </location>
    <ligand>
        <name>S-adenosyl-L-methionine</name>
        <dbReference type="ChEBI" id="CHEBI:59789"/>
    </ligand>
</feature>
<feature type="modified residue" description="Asymmetric dimethylarginine; by autocatalysis" evidence="3">
    <location>
        <position position="482"/>
    </location>
</feature>
<gene>
    <name evidence="3" type="primary">CARM1</name>
    <name type="ORF">AAEL006782</name>
</gene>
<keyword id="KW-0156">Chromatin regulator</keyword>
<keyword id="KW-0963">Cytoplasm</keyword>
<keyword id="KW-0488">Methylation</keyword>
<keyword id="KW-0489">Methyltransferase</keyword>
<keyword id="KW-0539">Nucleus</keyword>
<keyword id="KW-1185">Reference proteome</keyword>
<keyword id="KW-0949">S-adenosyl-L-methionine</keyword>
<keyword id="KW-0804">Transcription</keyword>
<keyword id="KW-0805">Transcription regulation</keyword>
<keyword id="KW-0808">Transferase</keyword>
<proteinExistence type="inferred from homology"/>
<comment type="function">
    <text evidence="3">Methylates (mono- and asymmetric dimethylation) the guanidino nitrogens of arginyl residues in proteins. May methylate histone H3 at 'Arg-17' and activate transcription via chromatin remodeling.</text>
</comment>
<comment type="catalytic activity">
    <reaction evidence="3">
        <text>L-arginyl-[protein] + 2 S-adenosyl-L-methionine = N(omega),N(omega)-dimethyl-L-arginyl-[protein] + 2 S-adenosyl-L-homocysteine + 2 H(+)</text>
        <dbReference type="Rhea" id="RHEA:48096"/>
        <dbReference type="Rhea" id="RHEA-COMP:10532"/>
        <dbReference type="Rhea" id="RHEA-COMP:11991"/>
        <dbReference type="ChEBI" id="CHEBI:15378"/>
        <dbReference type="ChEBI" id="CHEBI:29965"/>
        <dbReference type="ChEBI" id="CHEBI:57856"/>
        <dbReference type="ChEBI" id="CHEBI:59789"/>
        <dbReference type="ChEBI" id="CHEBI:61897"/>
        <dbReference type="EC" id="2.1.1.319"/>
    </reaction>
</comment>
<comment type="subunit">
    <text evidence="3">Homodimer.</text>
</comment>
<comment type="subcellular location">
    <subcellularLocation>
        <location evidence="4">Cytoplasm</location>
    </subcellularLocation>
    <subcellularLocation>
        <location evidence="4">Nucleus</location>
    </subcellularLocation>
</comment>
<comment type="PTM">
    <text evidence="3">The dimethylated protein is the major form.</text>
</comment>
<comment type="similarity">
    <text evidence="5">Belongs to the class I-like SAM-binding methyltransferase superfamily. Protein arginine N-methyltransferase family.</text>
</comment>
<accession>Q174R2</accession>
<sequence length="593" mass="66391">MFENQQQLLRLHGCKLFIIGENDNLVNKYGHSVAIACCYDPQGMSVRVFREGSQQQLEEYPVSVKTTHLNHGITSHILIVGGEMIYVKFASEEDCQSFRMLLQNMSGKVNSVFNLRTEDSSASQYFQFYGYLSQQQNMMQDFVRTSTYQRAIYSNSQDFHNKIVLDVGAGSGILSFFAVQAGAAKVYAVEASNMAQYAQQLVLSNNLDGKIIVIAGKIEEIELPEMVDIIISEPMGYMLYNERMLETYLHGKKWLRPEGKMFPSRGDLHVAPFTDEALYMEQYNKANFWMQTEFHGVNLVALRDAAMKEYFRQPIVDTFDIRICMAKSIRHTTNFLTADEKDLHRIQIDVEFHILETGTCHGLAFWFDVEFAGSCSQVWLSTAPTESLTHWYQVRCLLQTPIFVKQGQVLSGKVVLAANQRQSYDVEMDLKLEGTMITSTNTLDLKNPYFRYTGAPVPAPPGSNTTSPSEAYWGQLDAQGARNAVNLVNGITVNGLGEVDMTMINTNLMPIGNQPNIHPGLISSTGRQQSQQQTTPAQPLTMNPTIACAATSTQNVAQQQLIGGAISPSLFTTPTQQIINSHHAQPIHGAQFY</sequence>
<name>CARM1_AEDAE</name>
<evidence type="ECO:0000250" key="1"/>
<evidence type="ECO:0000250" key="2">
    <source>
        <dbReference type="UniProtKB" id="Q63009"/>
    </source>
</evidence>
<evidence type="ECO:0000250" key="3">
    <source>
        <dbReference type="UniProtKB" id="Q7Q2B7"/>
    </source>
</evidence>
<evidence type="ECO:0000250" key="4">
    <source>
        <dbReference type="UniProtKB" id="Q9VH48"/>
    </source>
</evidence>
<evidence type="ECO:0000255" key="5">
    <source>
        <dbReference type="PROSITE-ProRule" id="PRU01015"/>
    </source>
</evidence>
<evidence type="ECO:0000256" key="6">
    <source>
        <dbReference type="SAM" id="MobiDB-lite"/>
    </source>
</evidence>
<evidence type="ECO:0000312" key="7">
    <source>
        <dbReference type="EMBL" id="EAT41589.1"/>
    </source>
</evidence>
<organism>
    <name type="scientific">Aedes aegypti</name>
    <name type="common">Yellowfever mosquito</name>
    <name type="synonym">Culex aegypti</name>
    <dbReference type="NCBI Taxonomy" id="7159"/>
    <lineage>
        <taxon>Eukaryota</taxon>
        <taxon>Metazoa</taxon>
        <taxon>Ecdysozoa</taxon>
        <taxon>Arthropoda</taxon>
        <taxon>Hexapoda</taxon>
        <taxon>Insecta</taxon>
        <taxon>Pterygota</taxon>
        <taxon>Neoptera</taxon>
        <taxon>Endopterygota</taxon>
        <taxon>Diptera</taxon>
        <taxon>Nematocera</taxon>
        <taxon>Culicoidea</taxon>
        <taxon>Culicidae</taxon>
        <taxon>Culicinae</taxon>
        <taxon>Aedini</taxon>
        <taxon>Aedes</taxon>
        <taxon>Stegomyia</taxon>
    </lineage>
</organism>